<name>GATC_SALSA</name>
<proteinExistence type="evidence at transcript level"/>
<gene>
    <name type="primary">gatc</name>
</gene>
<accession>B5DFW7</accession>
<accession>B9ENL8</accession>
<comment type="function">
    <text evidence="1">Allows the formation of correctly charged Gln-tRNA(Gln) through the transamidation of misacylated Glu-tRNA(Gln) in the mitochondria. The reaction takes place in the presence of glutamine and ATP through an activated gamma-phospho-Glu-tRNA(Gln).</text>
</comment>
<comment type="catalytic activity">
    <reaction evidence="1">
        <text>L-glutamyl-tRNA(Gln) + L-glutamine + ATP + H2O = L-glutaminyl-tRNA(Gln) + L-glutamate + ADP + phosphate + H(+)</text>
        <dbReference type="Rhea" id="RHEA:17521"/>
        <dbReference type="Rhea" id="RHEA-COMP:9681"/>
        <dbReference type="Rhea" id="RHEA-COMP:9684"/>
        <dbReference type="ChEBI" id="CHEBI:15377"/>
        <dbReference type="ChEBI" id="CHEBI:15378"/>
        <dbReference type="ChEBI" id="CHEBI:29985"/>
        <dbReference type="ChEBI" id="CHEBI:30616"/>
        <dbReference type="ChEBI" id="CHEBI:43474"/>
        <dbReference type="ChEBI" id="CHEBI:58359"/>
        <dbReference type="ChEBI" id="CHEBI:78520"/>
        <dbReference type="ChEBI" id="CHEBI:78521"/>
        <dbReference type="ChEBI" id="CHEBI:456216"/>
    </reaction>
</comment>
<comment type="subunit">
    <text evidence="1">Subunit of the heterotrimeric GatCAB amidotransferase (AdT) complex, composed of A (qrsl1), B (gatb) and C (gatc) subunits.</text>
</comment>
<comment type="subcellular location">
    <subcellularLocation>
        <location evidence="1">Mitochondrion</location>
    </subcellularLocation>
</comment>
<comment type="miscellaneous">
    <text evidence="1">This protein may be expected to contain an N-terminal transit peptide but none has been predicted.</text>
</comment>
<comment type="similarity">
    <text evidence="1">Belongs to the GatC family.</text>
</comment>
<dbReference type="EC" id="6.3.5.-" evidence="1"/>
<dbReference type="EMBL" id="BT043526">
    <property type="protein sequence ID" value="ACH70641.1"/>
    <property type="molecule type" value="mRNA"/>
</dbReference>
<dbReference type="EMBL" id="BT057243">
    <property type="protein sequence ID" value="ACM09115.1"/>
    <property type="molecule type" value="mRNA"/>
</dbReference>
<dbReference type="RefSeq" id="NP_001133076.1">
    <property type="nucleotide sequence ID" value="NM_001139604.1"/>
</dbReference>
<dbReference type="SMR" id="B5DFW7"/>
<dbReference type="STRING" id="8030.ENSSSAP00000104379"/>
<dbReference type="PaxDb" id="8030-ENSSSAP00000104379"/>
<dbReference type="GeneID" id="100194518"/>
<dbReference type="KEGG" id="sasa:100194518"/>
<dbReference type="CTD" id="283459"/>
<dbReference type="OMA" id="VTEGECA"/>
<dbReference type="OrthoDB" id="504382at7898"/>
<dbReference type="Proteomes" id="UP000087266">
    <property type="component" value="Chromosome ssa24"/>
</dbReference>
<dbReference type="Bgee" id="ENSSSAG00000075942">
    <property type="expression patterns" value="Expressed in camera-type eye and 26 other cell types or tissues"/>
</dbReference>
<dbReference type="GO" id="GO:0030956">
    <property type="term" value="C:glutamyl-tRNA(Gln) amidotransferase complex"/>
    <property type="evidence" value="ECO:0007669"/>
    <property type="project" value="UniProtKB-UniRule"/>
</dbReference>
<dbReference type="GO" id="GO:0005739">
    <property type="term" value="C:mitochondrion"/>
    <property type="evidence" value="ECO:0007669"/>
    <property type="project" value="UniProtKB-SubCell"/>
</dbReference>
<dbReference type="GO" id="GO:0005524">
    <property type="term" value="F:ATP binding"/>
    <property type="evidence" value="ECO:0007669"/>
    <property type="project" value="UniProtKB-KW"/>
</dbReference>
<dbReference type="GO" id="GO:0050567">
    <property type="term" value="F:glutaminyl-tRNA synthase (glutamine-hydrolyzing) activity"/>
    <property type="evidence" value="ECO:0007669"/>
    <property type="project" value="UniProtKB-UniRule"/>
</dbReference>
<dbReference type="GO" id="GO:0070681">
    <property type="term" value="P:glutaminyl-tRNAGln biosynthesis via transamidation"/>
    <property type="evidence" value="ECO:0007669"/>
    <property type="project" value="UniProtKB-UniRule"/>
</dbReference>
<dbReference type="GO" id="GO:0032543">
    <property type="term" value="P:mitochondrial translation"/>
    <property type="evidence" value="ECO:0007669"/>
    <property type="project" value="UniProtKB-UniRule"/>
</dbReference>
<dbReference type="GO" id="GO:0006450">
    <property type="term" value="P:regulation of translational fidelity"/>
    <property type="evidence" value="ECO:0007669"/>
    <property type="project" value="InterPro"/>
</dbReference>
<dbReference type="HAMAP" id="MF_00122">
    <property type="entry name" value="GatC"/>
    <property type="match status" value="1"/>
</dbReference>
<dbReference type="InterPro" id="IPR036113">
    <property type="entry name" value="Asp/Glu-ADT_sf_sub_c"/>
</dbReference>
<dbReference type="InterPro" id="IPR003837">
    <property type="entry name" value="GatC"/>
</dbReference>
<dbReference type="NCBIfam" id="TIGR00135">
    <property type="entry name" value="gatC"/>
    <property type="match status" value="1"/>
</dbReference>
<dbReference type="PANTHER" id="PTHR15004">
    <property type="entry name" value="GLUTAMYL-TRNA(GLN) AMIDOTRANSFERASE SUBUNIT C, MITOCHONDRIAL"/>
    <property type="match status" value="1"/>
</dbReference>
<dbReference type="PANTHER" id="PTHR15004:SF0">
    <property type="entry name" value="GLUTAMYL-TRNA(GLN) AMIDOTRANSFERASE SUBUNIT C, MITOCHONDRIAL"/>
    <property type="match status" value="1"/>
</dbReference>
<dbReference type="Pfam" id="PF02686">
    <property type="entry name" value="GatC"/>
    <property type="match status" value="1"/>
</dbReference>
<dbReference type="SUPFAM" id="SSF141000">
    <property type="entry name" value="Glu-tRNAGln amidotransferase C subunit"/>
    <property type="match status" value="1"/>
</dbReference>
<reference key="1">
    <citation type="journal article" date="2009" name="BMC Genomics">
        <title>Characterization of full-length sequenced cDNA inserts (FLIcs) from Atlantic salmon (Salmo salar).</title>
        <authorList>
            <person name="Andreassen R."/>
            <person name="Lunner S."/>
            <person name="Hoyheim B."/>
        </authorList>
    </citation>
    <scope>NUCLEOTIDE SEQUENCE [LARGE SCALE MRNA]</scope>
    <source>
        <tissue>White muscle</tissue>
    </source>
</reference>
<reference key="2">
    <citation type="journal article" date="2010" name="BMC Genomics">
        <title>Salmo salar and Esox lucius full-length cDNA sequences reveal changes in evolutionary pressures on a post-tetraploidization genome.</title>
        <authorList>
            <person name="Leong J.S."/>
            <person name="Jantzen S.G."/>
            <person name="von Schalburg K.R."/>
            <person name="Cooper G.A."/>
            <person name="Messmer A.M."/>
            <person name="Liao N.Y."/>
            <person name="Munro S."/>
            <person name="Moore R."/>
            <person name="Holt R.A."/>
            <person name="Jones S.J."/>
            <person name="Davidson W.S."/>
            <person name="Koop B.F."/>
        </authorList>
    </citation>
    <scope>NUCLEOTIDE SEQUENCE [LARGE SCALE MRNA]</scope>
    <source>
        <tissue>Thymus</tissue>
    </source>
</reference>
<sequence length="194" mass="22004">MYVVVNYTRRLQTLAFNLGSSCYHQGVTGASITSQDRKSKQNFSCCRWTHLITLVHQYSTRISNSKVPRVATWEPVLENQLPPPCQIPVDLVDKLERLALVDFRNQEGLACLEKAIRFADQLHVVDTDGVDPMDSVLEERALYLREDAVAEGDCAEELLQLSKNTVEEYFVAPPGNIPLPKREERAAMLKHSEF</sequence>
<protein>
    <recommendedName>
        <fullName evidence="1">Glutamyl-tRNA(Gln) amidotransferase subunit C, mitochondrial</fullName>
        <shortName evidence="1">Glu-AdT subunit C</shortName>
        <ecNumber evidence="1">6.3.5.-</ecNumber>
    </recommendedName>
</protein>
<organism>
    <name type="scientific">Salmo salar</name>
    <name type="common">Atlantic salmon</name>
    <dbReference type="NCBI Taxonomy" id="8030"/>
    <lineage>
        <taxon>Eukaryota</taxon>
        <taxon>Metazoa</taxon>
        <taxon>Chordata</taxon>
        <taxon>Craniata</taxon>
        <taxon>Vertebrata</taxon>
        <taxon>Euteleostomi</taxon>
        <taxon>Actinopterygii</taxon>
        <taxon>Neopterygii</taxon>
        <taxon>Teleostei</taxon>
        <taxon>Protacanthopterygii</taxon>
        <taxon>Salmoniformes</taxon>
        <taxon>Salmonidae</taxon>
        <taxon>Salmoninae</taxon>
        <taxon>Salmo</taxon>
    </lineage>
</organism>
<evidence type="ECO:0000255" key="1">
    <source>
        <dbReference type="HAMAP-Rule" id="MF_03149"/>
    </source>
</evidence>
<evidence type="ECO:0000305" key="2"/>
<feature type="chain" id="PRO_0000413292" description="Glutamyl-tRNA(Gln) amidotransferase subunit C, mitochondrial">
    <location>
        <begin position="1"/>
        <end position="194"/>
    </location>
</feature>
<feature type="sequence conflict" description="In Ref. 2; ACM09115." evidence="2" ref="2">
    <original>P</original>
    <variation>L</variation>
    <location>
        <position position="83"/>
    </location>
</feature>
<keyword id="KW-0067">ATP-binding</keyword>
<keyword id="KW-0436">Ligase</keyword>
<keyword id="KW-0496">Mitochondrion</keyword>
<keyword id="KW-0547">Nucleotide-binding</keyword>
<keyword id="KW-0648">Protein biosynthesis</keyword>
<keyword id="KW-1185">Reference proteome</keyword>